<reference key="1">
    <citation type="journal article" date="2005" name="Genome Res.">
        <title>Coping with cold: the genome of the versatile marine Antarctica bacterium Pseudoalteromonas haloplanktis TAC125.</title>
        <authorList>
            <person name="Medigue C."/>
            <person name="Krin E."/>
            <person name="Pascal G."/>
            <person name="Barbe V."/>
            <person name="Bernsel A."/>
            <person name="Bertin P.N."/>
            <person name="Cheung F."/>
            <person name="Cruveiller S."/>
            <person name="D'Amico S."/>
            <person name="Duilio A."/>
            <person name="Fang G."/>
            <person name="Feller G."/>
            <person name="Ho C."/>
            <person name="Mangenot S."/>
            <person name="Marino G."/>
            <person name="Nilsson J."/>
            <person name="Parrilli E."/>
            <person name="Rocha E.P.C."/>
            <person name="Rouy Z."/>
            <person name="Sekowska A."/>
            <person name="Tutino M.L."/>
            <person name="Vallenet D."/>
            <person name="von Heijne G."/>
            <person name="Danchin A."/>
        </authorList>
    </citation>
    <scope>NUCLEOTIDE SEQUENCE [LARGE SCALE GENOMIC DNA]</scope>
    <source>
        <strain>TAC 125</strain>
    </source>
</reference>
<keyword id="KW-0030">Aminoacyl-tRNA synthetase</keyword>
<keyword id="KW-0067">ATP-binding</keyword>
<keyword id="KW-0963">Cytoplasm</keyword>
<keyword id="KW-0436">Ligase</keyword>
<keyword id="KW-0547">Nucleotide-binding</keyword>
<keyword id="KW-0648">Protein biosynthesis</keyword>
<keyword id="KW-1185">Reference proteome</keyword>
<feature type="chain" id="PRO_0000242068" description="Arginine--tRNA ligase">
    <location>
        <begin position="1"/>
        <end position="580"/>
    </location>
</feature>
<feature type="short sequence motif" description="'HIGH' region">
    <location>
        <begin position="123"/>
        <end position="133"/>
    </location>
</feature>
<sequence length="580" mass="64218">MNIRTILVEKAIAAMTTVGLPADTNPAVTQSTRPQFGDYQINAAMGAAKKMKSNPRELAQKIIDNLDVSDIAEKTEIAGPGFINIHLKPEFLAQSVKAANSDAKLAVNEHANPQKVVVDYSSPNLAKEMHVGHLRSTIIGDAIVRALEFRGDSVVRQNHMGDWGTQFGMLIAHLEDQISQGVDLDTVALADLETFYRDAKKRFDDEEGFADKARNYVVKLQGGDAHCEKLWKLFIATSVKHSEEVYKRLNVTLTQADIMAESAYNAELNDIISLLKDKNIAVESQGAQVVFLDELANKDGEPSAFIVQKSGGGFLYATTDLAACDYRSNKLGADRILIFVDARQSLHFNQVELTARKAGFLRDETSYEFCPFGTMMGADNKPFKTRTGGTVKLADLLEESINRAAIKLAERESDLSEQERSEIARKVGIGAVKYADLSKHRTSDYIFNWDSMLSFEGATAPYLQYAYTRIRSIFRKSGVDAATLNSNVTIVEPQEKALALKLLQLEEVLDLMITEATPHVLCGYLYELASLYMTFYEACPVLKEGVEPNVRDSRLVLCNLVSKTLETGLDLLGIEVMEQM</sequence>
<accession>Q3IHI4</accession>
<name>SYR_PSET1</name>
<gene>
    <name evidence="1" type="primary">argS</name>
    <name type="ordered locus">PSHAa0656</name>
</gene>
<comment type="catalytic activity">
    <reaction evidence="1">
        <text>tRNA(Arg) + L-arginine + ATP = L-arginyl-tRNA(Arg) + AMP + diphosphate</text>
        <dbReference type="Rhea" id="RHEA:20301"/>
        <dbReference type="Rhea" id="RHEA-COMP:9658"/>
        <dbReference type="Rhea" id="RHEA-COMP:9673"/>
        <dbReference type="ChEBI" id="CHEBI:30616"/>
        <dbReference type="ChEBI" id="CHEBI:32682"/>
        <dbReference type="ChEBI" id="CHEBI:33019"/>
        <dbReference type="ChEBI" id="CHEBI:78442"/>
        <dbReference type="ChEBI" id="CHEBI:78513"/>
        <dbReference type="ChEBI" id="CHEBI:456215"/>
        <dbReference type="EC" id="6.1.1.19"/>
    </reaction>
</comment>
<comment type="subunit">
    <text evidence="1">Monomer.</text>
</comment>
<comment type="subcellular location">
    <subcellularLocation>
        <location evidence="1">Cytoplasm</location>
    </subcellularLocation>
</comment>
<comment type="similarity">
    <text evidence="1">Belongs to the class-I aminoacyl-tRNA synthetase family.</text>
</comment>
<organism>
    <name type="scientific">Pseudoalteromonas translucida (strain TAC 125)</name>
    <dbReference type="NCBI Taxonomy" id="326442"/>
    <lineage>
        <taxon>Bacteria</taxon>
        <taxon>Pseudomonadati</taxon>
        <taxon>Pseudomonadota</taxon>
        <taxon>Gammaproteobacteria</taxon>
        <taxon>Alteromonadales</taxon>
        <taxon>Pseudoalteromonadaceae</taxon>
        <taxon>Pseudoalteromonas</taxon>
    </lineage>
</organism>
<dbReference type="EC" id="6.1.1.19" evidence="1"/>
<dbReference type="EMBL" id="CR954246">
    <property type="protein sequence ID" value="CAI85741.1"/>
    <property type="molecule type" value="Genomic_DNA"/>
</dbReference>
<dbReference type="SMR" id="Q3IHI4"/>
<dbReference type="STRING" id="326442.PSHAa0656"/>
<dbReference type="KEGG" id="pha:PSHAa0656"/>
<dbReference type="PATRIC" id="fig|326442.8.peg.620"/>
<dbReference type="eggNOG" id="COG0018">
    <property type="taxonomic scope" value="Bacteria"/>
</dbReference>
<dbReference type="HOGENOM" id="CLU_006406_5_1_6"/>
<dbReference type="BioCyc" id="PHAL326442:PSHA_RS03210-MONOMER"/>
<dbReference type="Proteomes" id="UP000006843">
    <property type="component" value="Chromosome I"/>
</dbReference>
<dbReference type="GO" id="GO:0005737">
    <property type="term" value="C:cytoplasm"/>
    <property type="evidence" value="ECO:0007669"/>
    <property type="project" value="UniProtKB-SubCell"/>
</dbReference>
<dbReference type="GO" id="GO:0004814">
    <property type="term" value="F:arginine-tRNA ligase activity"/>
    <property type="evidence" value="ECO:0007669"/>
    <property type="project" value="UniProtKB-UniRule"/>
</dbReference>
<dbReference type="GO" id="GO:0005524">
    <property type="term" value="F:ATP binding"/>
    <property type="evidence" value="ECO:0007669"/>
    <property type="project" value="UniProtKB-UniRule"/>
</dbReference>
<dbReference type="GO" id="GO:0006420">
    <property type="term" value="P:arginyl-tRNA aminoacylation"/>
    <property type="evidence" value="ECO:0007669"/>
    <property type="project" value="UniProtKB-UniRule"/>
</dbReference>
<dbReference type="CDD" id="cd07956">
    <property type="entry name" value="Anticodon_Ia_Arg"/>
    <property type="match status" value="1"/>
</dbReference>
<dbReference type="CDD" id="cd00671">
    <property type="entry name" value="ArgRS_core"/>
    <property type="match status" value="1"/>
</dbReference>
<dbReference type="FunFam" id="3.40.50.620:FF:000030">
    <property type="entry name" value="Arginine--tRNA ligase"/>
    <property type="match status" value="1"/>
</dbReference>
<dbReference type="FunFam" id="1.10.730.10:FF:000006">
    <property type="entry name" value="Arginyl-tRNA synthetase 2, mitochondrial"/>
    <property type="match status" value="1"/>
</dbReference>
<dbReference type="Gene3D" id="3.30.1360.70">
    <property type="entry name" value="Arginyl tRNA synthetase N-terminal domain"/>
    <property type="match status" value="1"/>
</dbReference>
<dbReference type="Gene3D" id="3.40.50.620">
    <property type="entry name" value="HUPs"/>
    <property type="match status" value="1"/>
</dbReference>
<dbReference type="Gene3D" id="1.10.730.10">
    <property type="entry name" value="Isoleucyl-tRNA Synthetase, Domain 1"/>
    <property type="match status" value="1"/>
</dbReference>
<dbReference type="HAMAP" id="MF_00123">
    <property type="entry name" value="Arg_tRNA_synth"/>
    <property type="match status" value="1"/>
</dbReference>
<dbReference type="InterPro" id="IPR001412">
    <property type="entry name" value="aa-tRNA-synth_I_CS"/>
</dbReference>
<dbReference type="InterPro" id="IPR001278">
    <property type="entry name" value="Arg-tRNA-ligase"/>
</dbReference>
<dbReference type="InterPro" id="IPR005148">
    <property type="entry name" value="Arg-tRNA-synth_N"/>
</dbReference>
<dbReference type="InterPro" id="IPR036695">
    <property type="entry name" value="Arg-tRNA-synth_N_sf"/>
</dbReference>
<dbReference type="InterPro" id="IPR035684">
    <property type="entry name" value="ArgRS_core"/>
</dbReference>
<dbReference type="InterPro" id="IPR008909">
    <property type="entry name" value="DALR_anticod-bd"/>
</dbReference>
<dbReference type="InterPro" id="IPR014729">
    <property type="entry name" value="Rossmann-like_a/b/a_fold"/>
</dbReference>
<dbReference type="InterPro" id="IPR009080">
    <property type="entry name" value="tRNAsynth_Ia_anticodon-bd"/>
</dbReference>
<dbReference type="NCBIfam" id="TIGR00456">
    <property type="entry name" value="argS"/>
    <property type="match status" value="1"/>
</dbReference>
<dbReference type="PANTHER" id="PTHR11956:SF5">
    <property type="entry name" value="ARGININE--TRNA LIGASE, CYTOPLASMIC"/>
    <property type="match status" value="1"/>
</dbReference>
<dbReference type="PANTHER" id="PTHR11956">
    <property type="entry name" value="ARGINYL-TRNA SYNTHETASE"/>
    <property type="match status" value="1"/>
</dbReference>
<dbReference type="Pfam" id="PF03485">
    <property type="entry name" value="Arg_tRNA_synt_N"/>
    <property type="match status" value="1"/>
</dbReference>
<dbReference type="Pfam" id="PF05746">
    <property type="entry name" value="DALR_1"/>
    <property type="match status" value="1"/>
</dbReference>
<dbReference type="Pfam" id="PF00750">
    <property type="entry name" value="tRNA-synt_1d"/>
    <property type="match status" value="1"/>
</dbReference>
<dbReference type="PRINTS" id="PR01038">
    <property type="entry name" value="TRNASYNTHARG"/>
</dbReference>
<dbReference type="SMART" id="SM01016">
    <property type="entry name" value="Arg_tRNA_synt_N"/>
    <property type="match status" value="1"/>
</dbReference>
<dbReference type="SMART" id="SM00836">
    <property type="entry name" value="DALR_1"/>
    <property type="match status" value="1"/>
</dbReference>
<dbReference type="SUPFAM" id="SSF47323">
    <property type="entry name" value="Anticodon-binding domain of a subclass of class I aminoacyl-tRNA synthetases"/>
    <property type="match status" value="1"/>
</dbReference>
<dbReference type="SUPFAM" id="SSF55190">
    <property type="entry name" value="Arginyl-tRNA synthetase (ArgRS), N-terminal 'additional' domain"/>
    <property type="match status" value="1"/>
</dbReference>
<dbReference type="SUPFAM" id="SSF52374">
    <property type="entry name" value="Nucleotidylyl transferase"/>
    <property type="match status" value="1"/>
</dbReference>
<dbReference type="PROSITE" id="PS00178">
    <property type="entry name" value="AA_TRNA_LIGASE_I"/>
    <property type="match status" value="1"/>
</dbReference>
<evidence type="ECO:0000255" key="1">
    <source>
        <dbReference type="HAMAP-Rule" id="MF_00123"/>
    </source>
</evidence>
<protein>
    <recommendedName>
        <fullName evidence="1">Arginine--tRNA ligase</fullName>
        <ecNumber evidence="1">6.1.1.19</ecNumber>
    </recommendedName>
    <alternativeName>
        <fullName evidence="1">Arginyl-tRNA synthetase</fullName>
        <shortName evidence="1">ArgRS</shortName>
    </alternativeName>
</protein>
<proteinExistence type="inferred from homology"/>